<accession>Q80WJ6</accession>
<accession>B2RRF4</accession>
<accession>Q80WJ2</accession>
<accession>Q80WJ3</accession>
<accession>Q8C0P3</accession>
<proteinExistence type="evidence at protein level"/>
<reference key="1">
    <citation type="journal article" date="2003" name="Gene">
        <title>Characterization of the mouse Abcc12 gene and its transcript encoding an ATP-binding cassette transporter, an orthologue of human ABCC12.</title>
        <authorList>
            <person name="Shimizu H."/>
            <person name="Taniguchi H."/>
            <person name="Hippo Y."/>
            <person name="Hayashizaki Y."/>
            <person name="Aburatani H."/>
            <person name="Ishikawa T."/>
        </authorList>
    </citation>
    <scope>NUCLEOTIDE SEQUENCE [MRNA] (ISOFORMS 1; 2 AND 3)</scope>
    <scope>TISSUE SPECIFICITY</scope>
    <source>
        <strain>BALB/cJ</strain>
        <tissue>Testis</tissue>
    </source>
</reference>
<reference key="2">
    <citation type="journal article" date="2005" name="Science">
        <title>The transcriptional landscape of the mammalian genome.</title>
        <authorList>
            <person name="Carninci P."/>
            <person name="Kasukawa T."/>
            <person name="Katayama S."/>
            <person name="Gough J."/>
            <person name="Frith M.C."/>
            <person name="Maeda N."/>
            <person name="Oyama R."/>
            <person name="Ravasi T."/>
            <person name="Lenhard B."/>
            <person name="Wells C."/>
            <person name="Kodzius R."/>
            <person name="Shimokawa K."/>
            <person name="Bajic V.B."/>
            <person name="Brenner S.E."/>
            <person name="Batalov S."/>
            <person name="Forrest A.R."/>
            <person name="Zavolan M."/>
            <person name="Davis M.J."/>
            <person name="Wilming L.G."/>
            <person name="Aidinis V."/>
            <person name="Allen J.E."/>
            <person name="Ambesi-Impiombato A."/>
            <person name="Apweiler R."/>
            <person name="Aturaliya R.N."/>
            <person name="Bailey T.L."/>
            <person name="Bansal M."/>
            <person name="Baxter L."/>
            <person name="Beisel K.W."/>
            <person name="Bersano T."/>
            <person name="Bono H."/>
            <person name="Chalk A.M."/>
            <person name="Chiu K.P."/>
            <person name="Choudhary V."/>
            <person name="Christoffels A."/>
            <person name="Clutterbuck D.R."/>
            <person name="Crowe M.L."/>
            <person name="Dalla E."/>
            <person name="Dalrymple B.P."/>
            <person name="de Bono B."/>
            <person name="Della Gatta G."/>
            <person name="di Bernardo D."/>
            <person name="Down T."/>
            <person name="Engstrom P."/>
            <person name="Fagiolini M."/>
            <person name="Faulkner G."/>
            <person name="Fletcher C.F."/>
            <person name="Fukushima T."/>
            <person name="Furuno M."/>
            <person name="Futaki S."/>
            <person name="Gariboldi M."/>
            <person name="Georgii-Hemming P."/>
            <person name="Gingeras T.R."/>
            <person name="Gojobori T."/>
            <person name="Green R.E."/>
            <person name="Gustincich S."/>
            <person name="Harbers M."/>
            <person name="Hayashi Y."/>
            <person name="Hensch T.K."/>
            <person name="Hirokawa N."/>
            <person name="Hill D."/>
            <person name="Huminiecki L."/>
            <person name="Iacono M."/>
            <person name="Ikeo K."/>
            <person name="Iwama A."/>
            <person name="Ishikawa T."/>
            <person name="Jakt M."/>
            <person name="Kanapin A."/>
            <person name="Katoh M."/>
            <person name="Kawasawa Y."/>
            <person name="Kelso J."/>
            <person name="Kitamura H."/>
            <person name="Kitano H."/>
            <person name="Kollias G."/>
            <person name="Krishnan S.P."/>
            <person name="Kruger A."/>
            <person name="Kummerfeld S.K."/>
            <person name="Kurochkin I.V."/>
            <person name="Lareau L.F."/>
            <person name="Lazarevic D."/>
            <person name="Lipovich L."/>
            <person name="Liu J."/>
            <person name="Liuni S."/>
            <person name="McWilliam S."/>
            <person name="Madan Babu M."/>
            <person name="Madera M."/>
            <person name="Marchionni L."/>
            <person name="Matsuda H."/>
            <person name="Matsuzawa S."/>
            <person name="Miki H."/>
            <person name="Mignone F."/>
            <person name="Miyake S."/>
            <person name="Morris K."/>
            <person name="Mottagui-Tabar S."/>
            <person name="Mulder N."/>
            <person name="Nakano N."/>
            <person name="Nakauchi H."/>
            <person name="Ng P."/>
            <person name="Nilsson R."/>
            <person name="Nishiguchi S."/>
            <person name="Nishikawa S."/>
            <person name="Nori F."/>
            <person name="Ohara O."/>
            <person name="Okazaki Y."/>
            <person name="Orlando V."/>
            <person name="Pang K.C."/>
            <person name="Pavan W.J."/>
            <person name="Pavesi G."/>
            <person name="Pesole G."/>
            <person name="Petrovsky N."/>
            <person name="Piazza S."/>
            <person name="Reed J."/>
            <person name="Reid J.F."/>
            <person name="Ring B.Z."/>
            <person name="Ringwald M."/>
            <person name="Rost B."/>
            <person name="Ruan Y."/>
            <person name="Salzberg S.L."/>
            <person name="Sandelin A."/>
            <person name="Schneider C."/>
            <person name="Schoenbach C."/>
            <person name="Sekiguchi K."/>
            <person name="Semple C.A."/>
            <person name="Seno S."/>
            <person name="Sessa L."/>
            <person name="Sheng Y."/>
            <person name="Shibata Y."/>
            <person name="Shimada H."/>
            <person name="Shimada K."/>
            <person name="Silva D."/>
            <person name="Sinclair B."/>
            <person name="Sperling S."/>
            <person name="Stupka E."/>
            <person name="Sugiura K."/>
            <person name="Sultana R."/>
            <person name="Takenaka Y."/>
            <person name="Taki K."/>
            <person name="Tammoja K."/>
            <person name="Tan S.L."/>
            <person name="Tang S."/>
            <person name="Taylor M.S."/>
            <person name="Tegner J."/>
            <person name="Teichmann S.A."/>
            <person name="Ueda H.R."/>
            <person name="van Nimwegen E."/>
            <person name="Verardo R."/>
            <person name="Wei C.L."/>
            <person name="Yagi K."/>
            <person name="Yamanishi H."/>
            <person name="Zabarovsky E."/>
            <person name="Zhu S."/>
            <person name="Zimmer A."/>
            <person name="Hide W."/>
            <person name="Bult C."/>
            <person name="Grimmond S.M."/>
            <person name="Teasdale R.D."/>
            <person name="Liu E.T."/>
            <person name="Brusic V."/>
            <person name="Quackenbush J."/>
            <person name="Wahlestedt C."/>
            <person name="Mattick J.S."/>
            <person name="Hume D.A."/>
            <person name="Kai C."/>
            <person name="Sasaki D."/>
            <person name="Tomaru Y."/>
            <person name="Fukuda S."/>
            <person name="Kanamori-Katayama M."/>
            <person name="Suzuki M."/>
            <person name="Aoki J."/>
            <person name="Arakawa T."/>
            <person name="Iida J."/>
            <person name="Imamura K."/>
            <person name="Itoh M."/>
            <person name="Kato T."/>
            <person name="Kawaji H."/>
            <person name="Kawagashira N."/>
            <person name="Kawashima T."/>
            <person name="Kojima M."/>
            <person name="Kondo S."/>
            <person name="Konno H."/>
            <person name="Nakano K."/>
            <person name="Ninomiya N."/>
            <person name="Nishio T."/>
            <person name="Okada M."/>
            <person name="Plessy C."/>
            <person name="Shibata K."/>
            <person name="Shiraki T."/>
            <person name="Suzuki S."/>
            <person name="Tagami M."/>
            <person name="Waki K."/>
            <person name="Watahiki A."/>
            <person name="Okamura-Oho Y."/>
            <person name="Suzuki H."/>
            <person name="Kawai J."/>
            <person name="Hayashizaki Y."/>
        </authorList>
    </citation>
    <scope>NUCLEOTIDE SEQUENCE [LARGE SCALE MRNA] (ISOFORM 4)</scope>
    <source>
        <strain>C57BL/6J</strain>
        <tissue>Testis</tissue>
    </source>
</reference>
<reference key="3">
    <citation type="journal article" date="2004" name="Genome Res.">
        <title>The status, quality, and expansion of the NIH full-length cDNA project: the Mammalian Gene Collection (MGC).</title>
        <authorList>
            <consortium name="The MGC Project Team"/>
        </authorList>
    </citation>
    <scope>NUCLEOTIDE SEQUENCE [LARGE SCALE MRNA] (ISOFORM 1)</scope>
    <source>
        <tissue>Brain</tissue>
    </source>
</reference>
<reference key="4">
    <citation type="journal article" date="2007" name="Biochem. J.">
        <title>Multidrug resistance-associated protein 9 (ABCC12) is present in mouse and boar sperm.</title>
        <authorList>
            <person name="Ono N."/>
            <person name="Van der Heijden I."/>
            <person name="Scheffer G.L."/>
            <person name="Van de Wetering K."/>
            <person name="Van Deemter E."/>
            <person name="De Haas M."/>
            <person name="Boerke A."/>
            <person name="Gadella B.M."/>
            <person name="De Rooij D.G."/>
            <person name="Neefjes J.J."/>
            <person name="Groothuis T.A."/>
            <person name="Oomen L."/>
            <person name="Brocks L."/>
            <person name="Ishikawa T."/>
            <person name="Borst P."/>
        </authorList>
    </citation>
    <scope>TISSUE SPECIFICITY</scope>
    <scope>DEVELOPMENTAL STAGE</scope>
</reference>
<evidence type="ECO:0000250" key="1">
    <source>
        <dbReference type="UniProtKB" id="Q96J65"/>
    </source>
</evidence>
<evidence type="ECO:0000255" key="2"/>
<evidence type="ECO:0000255" key="3">
    <source>
        <dbReference type="PROSITE-ProRule" id="PRU00434"/>
    </source>
</evidence>
<evidence type="ECO:0000255" key="4">
    <source>
        <dbReference type="PROSITE-ProRule" id="PRU00441"/>
    </source>
</evidence>
<evidence type="ECO:0000256" key="5">
    <source>
        <dbReference type="SAM" id="MobiDB-lite"/>
    </source>
</evidence>
<evidence type="ECO:0000269" key="6">
    <source>
    </source>
</evidence>
<evidence type="ECO:0000269" key="7">
    <source>
    </source>
</evidence>
<evidence type="ECO:0000269" key="8">
    <source>
    </source>
</evidence>
<evidence type="ECO:0000303" key="9">
    <source>
    </source>
</evidence>
<evidence type="ECO:0000303" key="10">
    <source>
    </source>
</evidence>
<evidence type="ECO:0000305" key="11"/>
<dbReference type="EMBL" id="AF502146">
    <property type="protein sequence ID" value="AAP30800.1"/>
    <property type="molecule type" value="mRNA"/>
</dbReference>
<dbReference type="EMBL" id="AF514414">
    <property type="protein sequence ID" value="AAP30871.1"/>
    <property type="molecule type" value="mRNA"/>
</dbReference>
<dbReference type="EMBL" id="AF514415">
    <property type="protein sequence ID" value="AAP30872.1"/>
    <property type="molecule type" value="mRNA"/>
</dbReference>
<dbReference type="EMBL" id="AK030123">
    <property type="protein sequence ID" value="BAC26794.1"/>
    <property type="molecule type" value="mRNA"/>
</dbReference>
<dbReference type="EMBL" id="AK133175">
    <property type="protein sequence ID" value="BAE21541.1"/>
    <property type="molecule type" value="mRNA"/>
</dbReference>
<dbReference type="EMBL" id="BC138380">
    <property type="protein sequence ID" value="AAI38381.1"/>
    <property type="molecule type" value="mRNA"/>
</dbReference>
<dbReference type="EMBL" id="BC138381">
    <property type="protein sequence ID" value="AAI38382.1"/>
    <property type="molecule type" value="mRNA"/>
</dbReference>
<dbReference type="EMBL" id="BC171952">
    <property type="protein sequence ID" value="AAI71952.1"/>
    <property type="molecule type" value="mRNA"/>
</dbReference>
<dbReference type="CCDS" id="CCDS22502.1">
    <molecule id="Q80WJ6-1"/>
</dbReference>
<dbReference type="RefSeq" id="NP_766500.3">
    <molecule id="Q80WJ6-1"/>
    <property type="nucleotide sequence ID" value="NM_172912.4"/>
</dbReference>
<dbReference type="RefSeq" id="XP_006531047.1">
    <molecule id="Q80WJ6-1"/>
    <property type="nucleotide sequence ID" value="XM_006530984.4"/>
</dbReference>
<dbReference type="SMR" id="Q80WJ6"/>
<dbReference type="FunCoup" id="Q80WJ6">
    <property type="interactions" value="109"/>
</dbReference>
<dbReference type="STRING" id="10090.ENSMUSP00000122402"/>
<dbReference type="GlyCosmos" id="Q80WJ6">
    <property type="glycosylation" value="2 sites, No reported glycans"/>
</dbReference>
<dbReference type="GlyGen" id="Q80WJ6">
    <property type="glycosylation" value="2 sites"/>
</dbReference>
<dbReference type="iPTMnet" id="Q80WJ6"/>
<dbReference type="PhosphoSitePlus" id="Q80WJ6"/>
<dbReference type="SwissPalm" id="Q80WJ6"/>
<dbReference type="PaxDb" id="10090-ENSMUSP00000122402"/>
<dbReference type="ProteomicsDB" id="290324">
    <molecule id="Q80WJ6-1"/>
</dbReference>
<dbReference type="ProteomicsDB" id="290325">
    <molecule id="Q80WJ6-2"/>
</dbReference>
<dbReference type="ProteomicsDB" id="290326">
    <molecule id="Q80WJ6-3"/>
</dbReference>
<dbReference type="ProteomicsDB" id="290327">
    <molecule id="Q80WJ6-4"/>
</dbReference>
<dbReference type="Antibodypedia" id="28132">
    <property type="antibodies" value="209 antibodies from 28 providers"/>
</dbReference>
<dbReference type="DNASU" id="244562"/>
<dbReference type="Ensembl" id="ENSMUST00000080115.10">
    <molecule id="Q80WJ6-1"/>
    <property type="protein sequence ID" value="ENSMUSP00000079014.4"/>
    <property type="gene ID" value="ENSMUSG00000036872.17"/>
</dbReference>
<dbReference type="Ensembl" id="ENSMUST00000129898.8">
    <molecule id="Q80WJ6-4"/>
    <property type="protein sequence ID" value="ENSMUSP00000122577.2"/>
    <property type="gene ID" value="ENSMUSG00000036872.17"/>
</dbReference>
<dbReference type="Ensembl" id="ENSMUST00000131423.8">
    <molecule id="Q80WJ6-1"/>
    <property type="protein sequence ID" value="ENSMUSP00000122402.2"/>
    <property type="gene ID" value="ENSMUSG00000036872.17"/>
</dbReference>
<dbReference type="Ensembl" id="ENSMUST00000152438.2">
    <molecule id="Q80WJ6-4"/>
    <property type="protein sequence ID" value="ENSMUSP00000114582.2"/>
    <property type="gene ID" value="ENSMUSG00000036872.17"/>
</dbReference>
<dbReference type="GeneID" id="244562"/>
<dbReference type="KEGG" id="mmu:244562"/>
<dbReference type="UCSC" id="uc009mqk.1">
    <molecule id="Q80WJ6-1"/>
    <property type="organism name" value="mouse"/>
</dbReference>
<dbReference type="UCSC" id="uc009mql.1">
    <molecule id="Q80WJ6-4"/>
    <property type="organism name" value="mouse"/>
</dbReference>
<dbReference type="AGR" id="MGI:2441679"/>
<dbReference type="CTD" id="94160"/>
<dbReference type="MGI" id="MGI:2441679">
    <property type="gene designation" value="Abcc12"/>
</dbReference>
<dbReference type="VEuPathDB" id="HostDB:ENSMUSG00000036872"/>
<dbReference type="eggNOG" id="KOG0054">
    <property type="taxonomic scope" value="Eukaryota"/>
</dbReference>
<dbReference type="GeneTree" id="ENSGT00940000159578"/>
<dbReference type="HOGENOM" id="CLU_000604_27_1_1"/>
<dbReference type="InParanoid" id="Q80WJ6"/>
<dbReference type="OMA" id="CPQDWPS"/>
<dbReference type="OrthoDB" id="6500128at2759"/>
<dbReference type="PhylomeDB" id="Q80WJ6"/>
<dbReference type="TreeFam" id="TF105202"/>
<dbReference type="BioGRID-ORCS" id="244562">
    <property type="hits" value="2 hits in 76 CRISPR screens"/>
</dbReference>
<dbReference type="PRO" id="PR:Q80WJ6"/>
<dbReference type="Proteomes" id="UP000000589">
    <property type="component" value="Chromosome 8"/>
</dbReference>
<dbReference type="RNAct" id="Q80WJ6">
    <property type="molecule type" value="protein"/>
</dbReference>
<dbReference type="Bgee" id="ENSMUSG00000036872">
    <property type="expression patterns" value="Expressed in spermatocyte and 31 other cell types or tissues"/>
</dbReference>
<dbReference type="ExpressionAtlas" id="Q80WJ6">
    <property type="expression patterns" value="baseline and differential"/>
</dbReference>
<dbReference type="GO" id="GO:0005783">
    <property type="term" value="C:endoplasmic reticulum"/>
    <property type="evidence" value="ECO:0000250"/>
    <property type="project" value="UniProtKB"/>
</dbReference>
<dbReference type="GO" id="GO:0005789">
    <property type="term" value="C:endoplasmic reticulum membrane"/>
    <property type="evidence" value="ECO:0007669"/>
    <property type="project" value="UniProtKB-SubCell"/>
</dbReference>
<dbReference type="GO" id="GO:0005739">
    <property type="term" value="C:mitochondrion"/>
    <property type="evidence" value="ECO:0007005"/>
    <property type="project" value="MGI"/>
</dbReference>
<dbReference type="GO" id="GO:0005886">
    <property type="term" value="C:plasma membrane"/>
    <property type="evidence" value="ECO:0007669"/>
    <property type="project" value="UniProtKB-ARBA"/>
</dbReference>
<dbReference type="GO" id="GO:0140359">
    <property type="term" value="F:ABC-type transporter activity"/>
    <property type="evidence" value="ECO:0007669"/>
    <property type="project" value="InterPro"/>
</dbReference>
<dbReference type="GO" id="GO:0005524">
    <property type="term" value="F:ATP binding"/>
    <property type="evidence" value="ECO:0007669"/>
    <property type="project" value="UniProtKB-KW"/>
</dbReference>
<dbReference type="GO" id="GO:0016887">
    <property type="term" value="F:ATP hydrolysis activity"/>
    <property type="evidence" value="ECO:0007669"/>
    <property type="project" value="InterPro"/>
</dbReference>
<dbReference type="CDD" id="cd18592">
    <property type="entry name" value="ABC_6TM_MRP5_8_9_D1"/>
    <property type="match status" value="1"/>
</dbReference>
<dbReference type="CDD" id="cd18599">
    <property type="entry name" value="ABC_6TM_MRP5_8_9_D2"/>
    <property type="match status" value="1"/>
</dbReference>
<dbReference type="CDD" id="cd03250">
    <property type="entry name" value="ABCC_MRP_domain1"/>
    <property type="match status" value="1"/>
</dbReference>
<dbReference type="CDD" id="cd03244">
    <property type="entry name" value="ABCC_MRP_domain2"/>
    <property type="match status" value="1"/>
</dbReference>
<dbReference type="FunFam" id="1.20.1560.10:FF:000012">
    <property type="entry name" value="ATP binding cassette subfamily C member 5"/>
    <property type="match status" value="1"/>
</dbReference>
<dbReference type="FunFam" id="3.40.50.300:FF:001128">
    <property type="entry name" value="ATP-binding cassette sub-family C member 12"/>
    <property type="match status" value="1"/>
</dbReference>
<dbReference type="FunFam" id="3.40.50.300:FF:000074">
    <property type="entry name" value="Multidrug resistance-associated protein 5 isoform 1"/>
    <property type="match status" value="1"/>
</dbReference>
<dbReference type="FunFam" id="1.20.1560.10:FF:000015">
    <property type="entry name" value="multidrug resistance-associated protein 5 isoform X1"/>
    <property type="match status" value="1"/>
</dbReference>
<dbReference type="Gene3D" id="1.20.1560.10">
    <property type="entry name" value="ABC transporter type 1, transmembrane domain"/>
    <property type="match status" value="2"/>
</dbReference>
<dbReference type="Gene3D" id="3.40.50.300">
    <property type="entry name" value="P-loop containing nucleotide triphosphate hydrolases"/>
    <property type="match status" value="2"/>
</dbReference>
<dbReference type="InterPro" id="IPR003593">
    <property type="entry name" value="AAA+_ATPase"/>
</dbReference>
<dbReference type="InterPro" id="IPR011527">
    <property type="entry name" value="ABC1_TM_dom"/>
</dbReference>
<dbReference type="InterPro" id="IPR036640">
    <property type="entry name" value="ABC1_TM_sf"/>
</dbReference>
<dbReference type="InterPro" id="IPR003439">
    <property type="entry name" value="ABC_transporter-like_ATP-bd"/>
</dbReference>
<dbReference type="InterPro" id="IPR017871">
    <property type="entry name" value="ABC_transporter-like_CS"/>
</dbReference>
<dbReference type="InterPro" id="IPR050173">
    <property type="entry name" value="ABC_transporter_C-like"/>
</dbReference>
<dbReference type="InterPro" id="IPR027417">
    <property type="entry name" value="P-loop_NTPase"/>
</dbReference>
<dbReference type="PANTHER" id="PTHR24223">
    <property type="entry name" value="ATP-BINDING CASSETTE SUB-FAMILY C"/>
    <property type="match status" value="1"/>
</dbReference>
<dbReference type="PANTHER" id="PTHR24223:SF10">
    <property type="entry name" value="ATP-BINDING CASSETTE SUB-FAMILY C MEMBER 12"/>
    <property type="match status" value="1"/>
</dbReference>
<dbReference type="Pfam" id="PF00664">
    <property type="entry name" value="ABC_membrane"/>
    <property type="match status" value="2"/>
</dbReference>
<dbReference type="Pfam" id="PF00005">
    <property type="entry name" value="ABC_tran"/>
    <property type="match status" value="2"/>
</dbReference>
<dbReference type="SMART" id="SM00382">
    <property type="entry name" value="AAA"/>
    <property type="match status" value="2"/>
</dbReference>
<dbReference type="SUPFAM" id="SSF90123">
    <property type="entry name" value="ABC transporter transmembrane region"/>
    <property type="match status" value="2"/>
</dbReference>
<dbReference type="SUPFAM" id="SSF52540">
    <property type="entry name" value="P-loop containing nucleoside triphosphate hydrolases"/>
    <property type="match status" value="2"/>
</dbReference>
<dbReference type="PROSITE" id="PS50929">
    <property type="entry name" value="ABC_TM1F"/>
    <property type="match status" value="2"/>
</dbReference>
<dbReference type="PROSITE" id="PS00211">
    <property type="entry name" value="ABC_TRANSPORTER_1"/>
    <property type="match status" value="2"/>
</dbReference>
<dbReference type="PROSITE" id="PS50893">
    <property type="entry name" value="ABC_TRANSPORTER_2"/>
    <property type="match status" value="2"/>
</dbReference>
<sequence length="1366" mass="153060">MVGEGPYLISDLDRRGHRRSFAERYDPSLKTMIPVRPRARLAPNPVDDAGLLSFATFSWLTPVMIRSYKHTLTVDTLPPLSPYDSSDINAKRFQILWEEEIKRVGPEKASLGRVVWKFQRTRVLMDVVANILCIVMAALGPTVLIHQILQHITSISSGHIGIGICLCLALFTTEFTKVLFWALAWAINYRTAIRLKVALSTLIFENLLSFKTLTHISAGEVLNILSSDSYSLFEAALFCPLPATIPILMVVCAVYAFFILGSTALVGISVYLIFIPIQMFMAKLNSTFRRSAISVTDKRVQTMNEFLTCIKLIKMYAWEESFINTIHDIRKREKKLLEKAGYVQSGNSALAPIVSTIAIVSTFTCHIFLKRKLTAPVAFSVIAMFNVMKFSIAILPFSVKAVAEASVSLRRMKKILIAKSPPSYITQPEDPDTILLLANATLTWEQEINRKSDPPKAQIQKRHVFKKQRPELYSEQSRSDQGVASPEWQSGSPKSVLHNISFVVRKGKVLGICGNVGSGKSSLISALLGQMQLQKGVVAVNGPLAYVSQQAWIFHGNVRENILFGEKYNHQRYQHTVHVCGLQKDLNSLPYGDLTEIGERGVNLSGGQRQRISLARAVYANRQLYLLDDPLSAVDAHVGKHVFEECIKKTLKGKTVVLVTHQLQFLESCDEVILLEDGEICEKGTHKELMEERGRYAKLIHNLRGLQFKDPEHIYNVAMVETLKESPAQRDEDAVLASGDEKDEGKEPETEEFVDTNAPAHQLIQTESPQEGIVTWKTYHTYIKASGGYLVSFLVLCLFFLMMGSSAFSTWWLGIWLDRGSQVVCASQNNKTACNVDQTLQDTKHHMYQLVYIASMVSVLMFGIIKGFTFTNTTLMASSSLHNRVFNKIVRSPMSFFDTTPTGRLMNRFSKDMDELDVRLPFHAENFLQQFFMVVFILVIMAAVFPVVLVVLAGLAVIFLILLRIFHRGVQELKQVENISRSPWFSHITSSIQGLGVIHAYDKKDDCISKFKTLNDENSSHLLYFNCALRWFALRMDILMNIVTFVVALLVTLSFSSISASSKGLSLSYIIQLSGLLQVCVRTGTETQAKFTSAELLREYILTCVPEHTHPFKVGTCPKDWPSRGEITFKDYRMRYRDNTPLVLDGLNLNIQSGQTVGIVGRTGSGKSSLGMALFRLVEPASGTIIIDEVDICTVGLEDLRTKLTMIPQDPVLFVGTVRYNLDPLGSHTDEMLWHVLERTFMRDTIMKLPEKLQAEVTENGENFSVGERQLLCMARALLRNSKIILLDEATASMDSKTDTLVQSTIKEAFKSCTVLTIAHRLNTVLNCDLVLVMENGKVIEFDKPEVLAEKPDSAFAMLLAAEVGL</sequence>
<name>MRP9_MOUSE</name>
<organism>
    <name type="scientific">Mus musculus</name>
    <name type="common">Mouse</name>
    <dbReference type="NCBI Taxonomy" id="10090"/>
    <lineage>
        <taxon>Eukaryota</taxon>
        <taxon>Metazoa</taxon>
        <taxon>Chordata</taxon>
        <taxon>Craniata</taxon>
        <taxon>Vertebrata</taxon>
        <taxon>Euteleostomi</taxon>
        <taxon>Mammalia</taxon>
        <taxon>Eutheria</taxon>
        <taxon>Euarchontoglires</taxon>
        <taxon>Glires</taxon>
        <taxon>Rodentia</taxon>
        <taxon>Myomorpha</taxon>
        <taxon>Muroidea</taxon>
        <taxon>Muridae</taxon>
        <taxon>Murinae</taxon>
        <taxon>Mus</taxon>
        <taxon>Mus</taxon>
    </lineage>
</organism>
<feature type="chain" id="PRO_0000253579" description="ATP-binding cassette sub-family C member 12">
    <location>
        <begin position="1"/>
        <end position="1366"/>
    </location>
</feature>
<feature type="transmembrane region" description="Helical" evidence="4">
    <location>
        <begin position="125"/>
        <end position="145"/>
    </location>
</feature>
<feature type="transmembrane region" description="Helical" evidence="4">
    <location>
        <begin position="152"/>
        <end position="172"/>
    </location>
</feature>
<feature type="transmembrane region" description="Helical" evidence="4">
    <location>
        <begin position="235"/>
        <end position="255"/>
    </location>
</feature>
<feature type="transmembrane region" description="Helical" evidence="4">
    <location>
        <begin position="257"/>
        <end position="277"/>
    </location>
</feature>
<feature type="transmembrane region" description="Helical" evidence="4">
    <location>
        <begin position="349"/>
        <end position="369"/>
    </location>
</feature>
<feature type="transmembrane region" description="Helical" evidence="4">
    <location>
        <begin position="377"/>
        <end position="397"/>
    </location>
</feature>
<feature type="transmembrane region" description="Helical" evidence="4">
    <location>
        <begin position="788"/>
        <end position="808"/>
    </location>
</feature>
<feature type="transmembrane region" description="Helical" evidence="4">
    <location>
        <begin position="850"/>
        <end position="870"/>
    </location>
</feature>
<feature type="transmembrane region" description="Helical" evidence="4">
    <location>
        <begin position="931"/>
        <end position="951"/>
    </location>
</feature>
<feature type="transmembrane region" description="Helical" evidence="4">
    <location>
        <begin position="1038"/>
        <end position="1058"/>
    </location>
</feature>
<feature type="domain" description="ABC transmembrane type-1 1" evidence="4">
    <location>
        <begin position="123"/>
        <end position="404"/>
    </location>
</feature>
<feature type="domain" description="ABC transporter 1" evidence="3">
    <location>
        <begin position="459"/>
        <end position="702"/>
    </location>
</feature>
<feature type="domain" description="ABC transmembrane type-1 2" evidence="4">
    <location>
        <begin position="792"/>
        <end position="1089"/>
    </location>
</feature>
<feature type="domain" description="ABC transporter 2" evidence="3">
    <location>
        <begin position="1127"/>
        <end position="1361"/>
    </location>
</feature>
<feature type="region of interest" description="Disordered" evidence="5">
    <location>
        <begin position="470"/>
        <end position="492"/>
    </location>
</feature>
<feature type="region of interest" description="Disordered" evidence="5">
    <location>
        <begin position="726"/>
        <end position="749"/>
    </location>
</feature>
<feature type="compositionally biased region" description="Polar residues" evidence="5">
    <location>
        <begin position="474"/>
        <end position="492"/>
    </location>
</feature>
<feature type="compositionally biased region" description="Basic and acidic residues" evidence="5">
    <location>
        <begin position="726"/>
        <end position="748"/>
    </location>
</feature>
<feature type="binding site" evidence="3">
    <location>
        <begin position="514"/>
        <end position="521"/>
    </location>
    <ligand>
        <name>ATP</name>
        <dbReference type="ChEBI" id="CHEBI:30616"/>
        <label>1</label>
    </ligand>
</feature>
<feature type="binding site" evidence="3">
    <location>
        <begin position="1161"/>
        <end position="1168"/>
    </location>
    <ligand>
        <name>ATP</name>
        <dbReference type="ChEBI" id="CHEBI:30616"/>
        <label>2</label>
    </ligand>
</feature>
<feature type="glycosylation site" description="N-linked (GlcNAc...) asparagine" evidence="2">
    <location>
        <position position="439"/>
    </location>
</feature>
<feature type="glycosylation site" description="N-linked (GlcNAc...) asparagine" evidence="2">
    <location>
        <position position="978"/>
    </location>
</feature>
<feature type="splice variant" id="VSP_021093" description="In isoform 2." evidence="9">
    <original>FLESCDEVILLEDGEICEKGTH</original>
    <variation>KVALPEQGIEMVGDTDESCSHS</variation>
    <location>
        <begin position="665"/>
        <end position="686"/>
    </location>
</feature>
<feature type="splice variant" id="VSP_021094" description="In isoform 2." evidence="9">
    <location>
        <begin position="687"/>
        <end position="1366"/>
    </location>
</feature>
<feature type="splice variant" id="VSP_021095" description="In isoform 4." evidence="10">
    <original>VLAS</original>
    <variation>GTVR</variation>
    <location>
        <begin position="735"/>
        <end position="738"/>
    </location>
</feature>
<feature type="splice variant" id="VSP_021096" description="In isoform 4." evidence="10">
    <location>
        <begin position="739"/>
        <end position="1366"/>
    </location>
</feature>
<feature type="splice variant" id="VSP_021097" description="In isoform 3." evidence="9">
    <original>APAHQLIQTESPQEGIV</original>
    <variation>VEGTSGSQNVKIWRRKS</variation>
    <location>
        <begin position="758"/>
        <end position="774"/>
    </location>
</feature>
<feature type="splice variant" id="VSP_021098" description="In isoform 3." evidence="9">
    <location>
        <begin position="775"/>
        <end position="1366"/>
    </location>
</feature>
<protein>
    <recommendedName>
        <fullName>ATP-binding cassette sub-family C member 12</fullName>
    </recommendedName>
    <alternativeName>
        <fullName>Multidrug resistance-associated protein 9</fullName>
    </alternativeName>
</protein>
<keyword id="KW-0025">Alternative splicing</keyword>
<keyword id="KW-0067">ATP-binding</keyword>
<keyword id="KW-0256">Endoplasmic reticulum</keyword>
<keyword id="KW-0325">Glycoprotein</keyword>
<keyword id="KW-0472">Membrane</keyword>
<keyword id="KW-0547">Nucleotide-binding</keyword>
<keyword id="KW-1185">Reference proteome</keyword>
<keyword id="KW-0677">Repeat</keyword>
<keyword id="KW-0812">Transmembrane</keyword>
<keyword id="KW-1133">Transmembrane helix</keyword>
<keyword id="KW-0813">Transport</keyword>
<comment type="function">
    <text evidence="1">Probable transporter, its substrate specificity is unknown.</text>
</comment>
<comment type="subcellular location">
    <subcellularLocation>
        <location evidence="1">Endoplasmic reticulum membrane</location>
        <topology evidence="2">Multi-pass membrane protein</topology>
    </subcellularLocation>
    <text evidence="8">Localizes to the midpiece of the sperm tail.</text>
</comment>
<comment type="alternative products">
    <event type="alternative splicing"/>
    <isoform>
        <id>Q80WJ6-1</id>
        <name>1</name>
        <sequence type="displayed"/>
    </isoform>
    <isoform>
        <id>Q80WJ6-2</id>
        <name>2</name>
        <name>B</name>
        <sequence type="described" ref="VSP_021093 VSP_021094"/>
    </isoform>
    <isoform>
        <id>Q80WJ6-3</id>
        <name>3</name>
        <name>A</name>
        <sequence type="described" ref="VSP_021097 VSP_021098"/>
    </isoform>
    <isoform>
        <id>Q80WJ6-4</id>
        <name>4</name>
        <sequence type="described" ref="VSP_021095 VSP_021096"/>
    </isoform>
</comment>
<comment type="tissue specificity">
    <text evidence="6 7 8">Widely expressed at low level (PubMed:12801629, PubMed:16141072, PubMed:17472575). Highly expressed in testis by Sertoli cells and Leydig cells (PubMed:12801629, PubMed:16141072). Detected in testicular germ cells and sperm (at protein level) (PubMed:17472575).</text>
</comment>
<comment type="developmental stage">
    <text evidence="8">First detected at 3 weeks of age IN the pachytene spermatocytes. During germ cell differentiation in the adult testis, pachytene spermatocytes in stage VI of the epithelial cycle are the first germ cells to show MRP9 expression.</text>
</comment>
<comment type="similarity">
    <text evidence="11">Belongs to the ABC transporter superfamily. ABCC family. Conjugate transporter (TC 3.A.1.208) subfamily.</text>
</comment>
<comment type="caution">
    <text evidence="1">Does not transport any of the organic anions transported by the other multidrug resistance-associated proteins (MRPs) in vesicular transport assays, nor does it confer resistance to cytotoxic agents in intact cell assays.</text>
</comment>
<gene>
    <name type="primary">Abcc12</name>
    <name type="synonym">Mrp9</name>
</gene>